<accession>Q1C3S8</accession>
<organism>
    <name type="scientific">Yersinia pestis bv. Antiqua (strain Antiqua)</name>
    <dbReference type="NCBI Taxonomy" id="360102"/>
    <lineage>
        <taxon>Bacteria</taxon>
        <taxon>Pseudomonadati</taxon>
        <taxon>Pseudomonadota</taxon>
        <taxon>Gammaproteobacteria</taxon>
        <taxon>Enterobacterales</taxon>
        <taxon>Yersiniaceae</taxon>
        <taxon>Yersinia</taxon>
    </lineage>
</organism>
<evidence type="ECO:0000255" key="1">
    <source>
        <dbReference type="HAMAP-Rule" id="MF_01092"/>
    </source>
</evidence>
<comment type="function">
    <text evidence="1">Cell division factor that enhances FtsZ-ring assembly. Directly interacts with FtsZ and promotes bundling of FtsZ protofilaments, with a reduction in FtsZ GTPase activity.</text>
</comment>
<comment type="subunit">
    <text evidence="1">Interacts with FtsZ.</text>
</comment>
<comment type="subcellular location">
    <subcellularLocation>
        <location evidence="1">Cytoplasm</location>
    </subcellularLocation>
    <text evidence="1">Localizes to mid-cell in an FtsZ-dependent manner.</text>
</comment>
<comment type="similarity">
    <text evidence="1">Belongs to the ZapD family.</text>
</comment>
<reference key="1">
    <citation type="journal article" date="2006" name="J. Bacteriol.">
        <title>Complete genome sequence of Yersinia pestis strains Antiqua and Nepal516: evidence of gene reduction in an emerging pathogen.</title>
        <authorList>
            <person name="Chain P.S.G."/>
            <person name="Hu P."/>
            <person name="Malfatti S.A."/>
            <person name="Radnedge L."/>
            <person name="Larimer F."/>
            <person name="Vergez L.M."/>
            <person name="Worsham P."/>
            <person name="Chu M.C."/>
            <person name="Andersen G.L."/>
        </authorList>
    </citation>
    <scope>NUCLEOTIDE SEQUENCE [LARGE SCALE GENOMIC DNA]</scope>
    <source>
        <strain>Antiqua</strain>
    </source>
</reference>
<proteinExistence type="inferred from homology"/>
<protein>
    <recommendedName>
        <fullName evidence="1">Cell division protein ZapD</fullName>
    </recommendedName>
    <alternativeName>
        <fullName evidence="1">Z ring-associated protein D</fullName>
    </alternativeName>
</protein>
<name>ZAPD_YERPA</name>
<dbReference type="EMBL" id="CP000308">
    <property type="protein sequence ID" value="ABG14894.1"/>
    <property type="molecule type" value="Genomic_DNA"/>
</dbReference>
<dbReference type="RefSeq" id="WP_002209318.1">
    <property type="nucleotide sequence ID" value="NZ_CP009906.1"/>
</dbReference>
<dbReference type="SMR" id="Q1C3S8"/>
<dbReference type="GeneID" id="57975279"/>
<dbReference type="KEGG" id="ypa:YPA_2932"/>
<dbReference type="Proteomes" id="UP000001971">
    <property type="component" value="Chromosome"/>
</dbReference>
<dbReference type="GO" id="GO:0032153">
    <property type="term" value="C:cell division site"/>
    <property type="evidence" value="ECO:0007669"/>
    <property type="project" value="TreeGrafter"/>
</dbReference>
<dbReference type="GO" id="GO:0005737">
    <property type="term" value="C:cytoplasm"/>
    <property type="evidence" value="ECO:0007669"/>
    <property type="project" value="UniProtKB-SubCell"/>
</dbReference>
<dbReference type="GO" id="GO:0000917">
    <property type="term" value="P:division septum assembly"/>
    <property type="evidence" value="ECO:0007669"/>
    <property type="project" value="UniProtKB-KW"/>
</dbReference>
<dbReference type="GO" id="GO:0043093">
    <property type="term" value="P:FtsZ-dependent cytokinesis"/>
    <property type="evidence" value="ECO:0007669"/>
    <property type="project" value="UniProtKB-UniRule"/>
</dbReference>
<dbReference type="FunFam" id="1.10.3900.10:FF:000001">
    <property type="entry name" value="Cell division protein ZapD"/>
    <property type="match status" value="1"/>
</dbReference>
<dbReference type="FunFam" id="2.60.440.10:FF:000001">
    <property type="entry name" value="Cell division protein ZapD"/>
    <property type="match status" value="1"/>
</dbReference>
<dbReference type="Gene3D" id="1.10.3900.10">
    <property type="entry name" value="YacF-like"/>
    <property type="match status" value="1"/>
</dbReference>
<dbReference type="Gene3D" id="2.60.440.10">
    <property type="entry name" value="YacF-like domains"/>
    <property type="match status" value="1"/>
</dbReference>
<dbReference type="HAMAP" id="MF_01092">
    <property type="entry name" value="ZapD"/>
    <property type="match status" value="1"/>
</dbReference>
<dbReference type="InterPro" id="IPR009777">
    <property type="entry name" value="ZapD"/>
</dbReference>
<dbReference type="InterPro" id="IPR027462">
    <property type="entry name" value="ZapD_C"/>
</dbReference>
<dbReference type="InterPro" id="IPR036268">
    <property type="entry name" value="ZapD_sf"/>
</dbReference>
<dbReference type="NCBIfam" id="NF003653">
    <property type="entry name" value="PRK05287.1-1"/>
    <property type="match status" value="1"/>
</dbReference>
<dbReference type="NCBIfam" id="NF003655">
    <property type="entry name" value="PRK05287.1-3"/>
    <property type="match status" value="1"/>
</dbReference>
<dbReference type="PANTHER" id="PTHR39455">
    <property type="entry name" value="CELL DIVISION PROTEIN ZAPD"/>
    <property type="match status" value="1"/>
</dbReference>
<dbReference type="PANTHER" id="PTHR39455:SF1">
    <property type="entry name" value="CELL DIVISION PROTEIN ZAPD"/>
    <property type="match status" value="1"/>
</dbReference>
<dbReference type="Pfam" id="PF07072">
    <property type="entry name" value="ZapD"/>
    <property type="match status" value="1"/>
</dbReference>
<dbReference type="SUPFAM" id="SSF160950">
    <property type="entry name" value="YacF-like"/>
    <property type="match status" value="1"/>
</dbReference>
<sequence>MSDLTSTILFEHPLNEKMRTWLRMEFLLQQLESHRSLDNIANALTFFRTASDLIDVLERGEVRTDLLKELERQQQKLQQWADIPGVDVSLVDSLRNQLKSRAAVLMSAPRIGQSLKEDRLISVVRQRLSIPGGCCSFDLPTLHVWLHQPSEQRDQHINKLLASLAPLHQSLTIILDLIRQSCPLRSQISLNGFFQDNAGGADLLRLRLPLDPQLYPQISGHKTRYAIRFLALDSENGTVPARLSFELACC</sequence>
<keyword id="KW-0131">Cell cycle</keyword>
<keyword id="KW-0132">Cell division</keyword>
<keyword id="KW-0963">Cytoplasm</keyword>
<keyword id="KW-0717">Septation</keyword>
<feature type="chain" id="PRO_1000064931" description="Cell division protein ZapD">
    <location>
        <begin position="1"/>
        <end position="250"/>
    </location>
</feature>
<gene>
    <name evidence="1" type="primary">zapD</name>
    <name type="ordered locus">YPA_2932</name>
</gene>